<feature type="chain" id="PRO_1000065954" description="Orotidine 5'-phosphate decarboxylase">
    <location>
        <begin position="1"/>
        <end position="231"/>
    </location>
</feature>
<feature type="active site" description="Proton donor" evidence="1">
    <location>
        <position position="63"/>
    </location>
</feature>
<feature type="binding site" evidence="1">
    <location>
        <position position="11"/>
    </location>
    <ligand>
        <name>substrate</name>
    </ligand>
</feature>
<feature type="binding site" evidence="1">
    <location>
        <position position="34"/>
    </location>
    <ligand>
        <name>substrate</name>
    </ligand>
</feature>
<feature type="binding site" evidence="1">
    <location>
        <begin position="61"/>
        <end position="70"/>
    </location>
    <ligand>
        <name>substrate</name>
    </ligand>
</feature>
<feature type="binding site" evidence="1">
    <location>
        <position position="117"/>
    </location>
    <ligand>
        <name>substrate</name>
    </ligand>
</feature>
<feature type="binding site" evidence="1">
    <location>
        <position position="179"/>
    </location>
    <ligand>
        <name>substrate</name>
    </ligand>
</feature>
<feature type="binding site" evidence="1">
    <location>
        <position position="188"/>
    </location>
    <ligand>
        <name>substrate</name>
    </ligand>
</feature>
<feature type="binding site" evidence="1">
    <location>
        <position position="208"/>
    </location>
    <ligand>
        <name>substrate</name>
    </ligand>
</feature>
<feature type="binding site" evidence="1">
    <location>
        <position position="209"/>
    </location>
    <ligand>
        <name>substrate</name>
    </ligand>
</feature>
<evidence type="ECO:0000255" key="1">
    <source>
        <dbReference type="HAMAP-Rule" id="MF_01200"/>
    </source>
</evidence>
<organism>
    <name type="scientific">Streptococcus thermophilus (strain ATCC BAA-491 / LMD-9)</name>
    <dbReference type="NCBI Taxonomy" id="322159"/>
    <lineage>
        <taxon>Bacteria</taxon>
        <taxon>Bacillati</taxon>
        <taxon>Bacillota</taxon>
        <taxon>Bacilli</taxon>
        <taxon>Lactobacillales</taxon>
        <taxon>Streptococcaceae</taxon>
        <taxon>Streptococcus</taxon>
    </lineage>
</organism>
<proteinExistence type="inferred from homology"/>
<gene>
    <name evidence="1" type="primary">pyrF</name>
    <name type="ordered locus">STER_0980</name>
</gene>
<keyword id="KW-0210">Decarboxylase</keyword>
<keyword id="KW-0456">Lyase</keyword>
<keyword id="KW-0665">Pyrimidine biosynthesis</keyword>
<sequence>MRENRPVIALDFPTLEDVKAFLAKFPADEKLYVKIGMELYYAAGPEIIRYVKELGHSIFLDLKLHDIPNTVKSAMRVLSNLGVDMTNVHAAGGVEMMKAAREGLGDGPILIAVTQLTSTSEEQMRDFQNIQTTLQESVVHYAQKTAEAGLDGVVCSAHEVPKIKEATNQDFICLTPGIRPAGAAVGDQKRVMTPADAHQIGSDYIVVGRPITQAEDPVAAYHDIKAQWNDQ</sequence>
<reference key="1">
    <citation type="journal article" date="2006" name="Proc. Natl. Acad. Sci. U.S.A.">
        <title>Comparative genomics of the lactic acid bacteria.</title>
        <authorList>
            <person name="Makarova K.S."/>
            <person name="Slesarev A."/>
            <person name="Wolf Y.I."/>
            <person name="Sorokin A."/>
            <person name="Mirkin B."/>
            <person name="Koonin E.V."/>
            <person name="Pavlov A."/>
            <person name="Pavlova N."/>
            <person name="Karamychev V."/>
            <person name="Polouchine N."/>
            <person name="Shakhova V."/>
            <person name="Grigoriev I."/>
            <person name="Lou Y."/>
            <person name="Rohksar D."/>
            <person name="Lucas S."/>
            <person name="Huang K."/>
            <person name="Goodstein D.M."/>
            <person name="Hawkins T."/>
            <person name="Plengvidhya V."/>
            <person name="Welker D."/>
            <person name="Hughes J."/>
            <person name="Goh Y."/>
            <person name="Benson A."/>
            <person name="Baldwin K."/>
            <person name="Lee J.-H."/>
            <person name="Diaz-Muniz I."/>
            <person name="Dosti B."/>
            <person name="Smeianov V."/>
            <person name="Wechter W."/>
            <person name="Barabote R."/>
            <person name="Lorca G."/>
            <person name="Altermann E."/>
            <person name="Barrangou R."/>
            <person name="Ganesan B."/>
            <person name="Xie Y."/>
            <person name="Rawsthorne H."/>
            <person name="Tamir D."/>
            <person name="Parker C."/>
            <person name="Breidt F."/>
            <person name="Broadbent J.R."/>
            <person name="Hutkins R."/>
            <person name="O'Sullivan D."/>
            <person name="Steele J."/>
            <person name="Unlu G."/>
            <person name="Saier M.H. Jr."/>
            <person name="Klaenhammer T."/>
            <person name="Richardson P."/>
            <person name="Kozyavkin S."/>
            <person name="Weimer B.C."/>
            <person name="Mills D.A."/>
        </authorList>
    </citation>
    <scope>NUCLEOTIDE SEQUENCE [LARGE SCALE GENOMIC DNA]</scope>
    <source>
        <strain>ATCC BAA-491 / LMD-9</strain>
    </source>
</reference>
<name>PYRF_STRTD</name>
<dbReference type="EC" id="4.1.1.23" evidence="1"/>
<dbReference type="EMBL" id="CP000419">
    <property type="protein sequence ID" value="ABJ66196.1"/>
    <property type="molecule type" value="Genomic_DNA"/>
</dbReference>
<dbReference type="RefSeq" id="WP_011681116.1">
    <property type="nucleotide sequence ID" value="NC_008532.1"/>
</dbReference>
<dbReference type="SMR" id="Q03KS6"/>
<dbReference type="KEGG" id="ste:STER_0980"/>
<dbReference type="HOGENOM" id="CLU_067069_1_1_9"/>
<dbReference type="UniPathway" id="UPA00070">
    <property type="reaction ID" value="UER00120"/>
</dbReference>
<dbReference type="GO" id="GO:0005829">
    <property type="term" value="C:cytosol"/>
    <property type="evidence" value="ECO:0007669"/>
    <property type="project" value="TreeGrafter"/>
</dbReference>
<dbReference type="GO" id="GO:0004590">
    <property type="term" value="F:orotidine-5'-phosphate decarboxylase activity"/>
    <property type="evidence" value="ECO:0007669"/>
    <property type="project" value="UniProtKB-UniRule"/>
</dbReference>
<dbReference type="GO" id="GO:0006207">
    <property type="term" value="P:'de novo' pyrimidine nucleobase biosynthetic process"/>
    <property type="evidence" value="ECO:0007669"/>
    <property type="project" value="InterPro"/>
</dbReference>
<dbReference type="GO" id="GO:0044205">
    <property type="term" value="P:'de novo' UMP biosynthetic process"/>
    <property type="evidence" value="ECO:0007669"/>
    <property type="project" value="UniProtKB-UniRule"/>
</dbReference>
<dbReference type="CDD" id="cd04725">
    <property type="entry name" value="OMP_decarboxylase_like"/>
    <property type="match status" value="1"/>
</dbReference>
<dbReference type="FunFam" id="3.20.20.70:FF:000015">
    <property type="entry name" value="Orotidine 5'-phosphate decarboxylase"/>
    <property type="match status" value="1"/>
</dbReference>
<dbReference type="Gene3D" id="3.20.20.70">
    <property type="entry name" value="Aldolase class I"/>
    <property type="match status" value="1"/>
</dbReference>
<dbReference type="HAMAP" id="MF_01200_B">
    <property type="entry name" value="OMPdecase_type1_B"/>
    <property type="match status" value="1"/>
</dbReference>
<dbReference type="InterPro" id="IPR013785">
    <property type="entry name" value="Aldolase_TIM"/>
</dbReference>
<dbReference type="InterPro" id="IPR014732">
    <property type="entry name" value="OMPdecase"/>
</dbReference>
<dbReference type="InterPro" id="IPR018089">
    <property type="entry name" value="OMPdecase_AS"/>
</dbReference>
<dbReference type="InterPro" id="IPR047596">
    <property type="entry name" value="OMPdecase_bac"/>
</dbReference>
<dbReference type="InterPro" id="IPR001754">
    <property type="entry name" value="OMPdeCOase_dom"/>
</dbReference>
<dbReference type="InterPro" id="IPR011060">
    <property type="entry name" value="RibuloseP-bd_barrel"/>
</dbReference>
<dbReference type="NCBIfam" id="NF001273">
    <property type="entry name" value="PRK00230.1"/>
    <property type="match status" value="1"/>
</dbReference>
<dbReference type="NCBIfam" id="TIGR01740">
    <property type="entry name" value="pyrF"/>
    <property type="match status" value="1"/>
</dbReference>
<dbReference type="PANTHER" id="PTHR32119">
    <property type="entry name" value="OROTIDINE 5'-PHOSPHATE DECARBOXYLASE"/>
    <property type="match status" value="1"/>
</dbReference>
<dbReference type="PANTHER" id="PTHR32119:SF2">
    <property type="entry name" value="OROTIDINE 5'-PHOSPHATE DECARBOXYLASE"/>
    <property type="match status" value="1"/>
</dbReference>
<dbReference type="Pfam" id="PF00215">
    <property type="entry name" value="OMPdecase"/>
    <property type="match status" value="1"/>
</dbReference>
<dbReference type="SMART" id="SM00934">
    <property type="entry name" value="OMPdecase"/>
    <property type="match status" value="1"/>
</dbReference>
<dbReference type="SUPFAM" id="SSF51366">
    <property type="entry name" value="Ribulose-phoshate binding barrel"/>
    <property type="match status" value="1"/>
</dbReference>
<dbReference type="PROSITE" id="PS00156">
    <property type="entry name" value="OMPDECASE"/>
    <property type="match status" value="1"/>
</dbReference>
<comment type="function">
    <text evidence="1">Catalyzes the decarboxylation of orotidine 5'-monophosphate (OMP) to uridine 5'-monophosphate (UMP).</text>
</comment>
<comment type="catalytic activity">
    <reaction evidence="1">
        <text>orotidine 5'-phosphate + H(+) = UMP + CO2</text>
        <dbReference type="Rhea" id="RHEA:11596"/>
        <dbReference type="ChEBI" id="CHEBI:15378"/>
        <dbReference type="ChEBI" id="CHEBI:16526"/>
        <dbReference type="ChEBI" id="CHEBI:57538"/>
        <dbReference type="ChEBI" id="CHEBI:57865"/>
        <dbReference type="EC" id="4.1.1.23"/>
    </reaction>
</comment>
<comment type="pathway">
    <text evidence="1">Pyrimidine metabolism; UMP biosynthesis via de novo pathway; UMP from orotate: step 2/2.</text>
</comment>
<comment type="subunit">
    <text evidence="1">Homodimer.</text>
</comment>
<comment type="similarity">
    <text evidence="1">Belongs to the OMP decarboxylase family. Type 1 subfamily.</text>
</comment>
<protein>
    <recommendedName>
        <fullName evidence="1">Orotidine 5'-phosphate decarboxylase</fullName>
        <ecNumber evidence="1">4.1.1.23</ecNumber>
    </recommendedName>
    <alternativeName>
        <fullName evidence="1">OMP decarboxylase</fullName>
        <shortName evidence="1">OMPDCase</shortName>
        <shortName evidence="1">OMPdecase</shortName>
    </alternativeName>
</protein>
<accession>Q03KS6</accession>